<evidence type="ECO:0000255" key="1">
    <source>
        <dbReference type="HAMAP-Rule" id="MF_00531"/>
    </source>
</evidence>
<evidence type="ECO:0000305" key="2"/>
<protein>
    <recommendedName>
        <fullName evidence="1">Small ribosomal subunit protein uS19</fullName>
    </recommendedName>
    <alternativeName>
        <fullName evidence="2">30S ribosomal protein S19</fullName>
    </alternativeName>
</protein>
<keyword id="KW-0687">Ribonucleoprotein</keyword>
<keyword id="KW-0689">Ribosomal protein</keyword>
<keyword id="KW-0694">RNA-binding</keyword>
<keyword id="KW-0699">rRNA-binding</keyword>
<sequence>MARSVWKGPFVDGYLLKKAEKVREGGRNEVIKMWSRRSTILPQFVGLTFGVYNGNKHVPVSVSEEMVGHKFGEFAPTRTYYGHGADKKAKRK</sequence>
<name>RS19_BRUMB</name>
<dbReference type="EMBL" id="CP001488">
    <property type="protein sequence ID" value="ACO01005.1"/>
    <property type="molecule type" value="Genomic_DNA"/>
</dbReference>
<dbReference type="RefSeq" id="WP_002964358.1">
    <property type="nucleotide sequence ID" value="NC_012441.1"/>
</dbReference>
<dbReference type="SMR" id="C0RJJ7"/>
<dbReference type="GeneID" id="97533528"/>
<dbReference type="KEGG" id="bmi:BMEA_A1274"/>
<dbReference type="HOGENOM" id="CLU_144911_0_1_5"/>
<dbReference type="Proteomes" id="UP000001748">
    <property type="component" value="Chromosome I"/>
</dbReference>
<dbReference type="GO" id="GO:0005737">
    <property type="term" value="C:cytoplasm"/>
    <property type="evidence" value="ECO:0007669"/>
    <property type="project" value="UniProtKB-ARBA"/>
</dbReference>
<dbReference type="GO" id="GO:0015935">
    <property type="term" value="C:small ribosomal subunit"/>
    <property type="evidence" value="ECO:0007669"/>
    <property type="project" value="InterPro"/>
</dbReference>
<dbReference type="GO" id="GO:0019843">
    <property type="term" value="F:rRNA binding"/>
    <property type="evidence" value="ECO:0007669"/>
    <property type="project" value="UniProtKB-UniRule"/>
</dbReference>
<dbReference type="GO" id="GO:0003735">
    <property type="term" value="F:structural constituent of ribosome"/>
    <property type="evidence" value="ECO:0007669"/>
    <property type="project" value="InterPro"/>
</dbReference>
<dbReference type="GO" id="GO:0000028">
    <property type="term" value="P:ribosomal small subunit assembly"/>
    <property type="evidence" value="ECO:0007669"/>
    <property type="project" value="TreeGrafter"/>
</dbReference>
<dbReference type="GO" id="GO:0006412">
    <property type="term" value="P:translation"/>
    <property type="evidence" value="ECO:0007669"/>
    <property type="project" value="UniProtKB-UniRule"/>
</dbReference>
<dbReference type="FunFam" id="3.30.860.10:FF:000001">
    <property type="entry name" value="30S ribosomal protein S19"/>
    <property type="match status" value="1"/>
</dbReference>
<dbReference type="Gene3D" id="3.30.860.10">
    <property type="entry name" value="30s Ribosomal Protein S19, Chain A"/>
    <property type="match status" value="1"/>
</dbReference>
<dbReference type="HAMAP" id="MF_00531">
    <property type="entry name" value="Ribosomal_uS19"/>
    <property type="match status" value="1"/>
</dbReference>
<dbReference type="InterPro" id="IPR002222">
    <property type="entry name" value="Ribosomal_uS19"/>
</dbReference>
<dbReference type="InterPro" id="IPR005732">
    <property type="entry name" value="Ribosomal_uS19_bac-type"/>
</dbReference>
<dbReference type="InterPro" id="IPR020934">
    <property type="entry name" value="Ribosomal_uS19_CS"/>
</dbReference>
<dbReference type="InterPro" id="IPR023575">
    <property type="entry name" value="Ribosomal_uS19_SF"/>
</dbReference>
<dbReference type="NCBIfam" id="TIGR01050">
    <property type="entry name" value="rpsS_bact"/>
    <property type="match status" value="1"/>
</dbReference>
<dbReference type="PANTHER" id="PTHR11880">
    <property type="entry name" value="RIBOSOMAL PROTEIN S19P FAMILY MEMBER"/>
    <property type="match status" value="1"/>
</dbReference>
<dbReference type="PANTHER" id="PTHR11880:SF8">
    <property type="entry name" value="SMALL RIBOSOMAL SUBUNIT PROTEIN US19M"/>
    <property type="match status" value="1"/>
</dbReference>
<dbReference type="Pfam" id="PF00203">
    <property type="entry name" value="Ribosomal_S19"/>
    <property type="match status" value="1"/>
</dbReference>
<dbReference type="PIRSF" id="PIRSF002144">
    <property type="entry name" value="Ribosomal_S19"/>
    <property type="match status" value="1"/>
</dbReference>
<dbReference type="PRINTS" id="PR00975">
    <property type="entry name" value="RIBOSOMALS19"/>
</dbReference>
<dbReference type="SUPFAM" id="SSF54570">
    <property type="entry name" value="Ribosomal protein S19"/>
    <property type="match status" value="1"/>
</dbReference>
<dbReference type="PROSITE" id="PS00323">
    <property type="entry name" value="RIBOSOMAL_S19"/>
    <property type="match status" value="1"/>
</dbReference>
<gene>
    <name evidence="1" type="primary">rpsS</name>
    <name type="ordered locus">BMEA_A1274</name>
</gene>
<reference key="1">
    <citation type="submission" date="2009-03" db="EMBL/GenBank/DDBJ databases">
        <title>Brucella melitensis ATCC 23457 whole genome shotgun sequencing project.</title>
        <authorList>
            <person name="Setubal J.C."/>
            <person name="Boyle S."/>
            <person name="Crasta O.R."/>
            <person name="Gillespie J.J."/>
            <person name="Kenyon R.W."/>
            <person name="Lu J."/>
            <person name="Mane S."/>
            <person name="Nagrani S."/>
            <person name="Shallom J.M."/>
            <person name="Shallom S."/>
            <person name="Shukla M."/>
            <person name="Snyder E.E."/>
            <person name="Sobral B.W."/>
            <person name="Wattam A.R."/>
            <person name="Will R."/>
            <person name="Williams K."/>
            <person name="Yoo H."/>
            <person name="Munk C."/>
            <person name="Tapia R."/>
            <person name="Han C."/>
            <person name="Detter J.C."/>
            <person name="Bruce D."/>
            <person name="Brettin T.S."/>
        </authorList>
    </citation>
    <scope>NUCLEOTIDE SEQUENCE [LARGE SCALE GENOMIC DNA]</scope>
    <source>
        <strain>ATCC 23457</strain>
    </source>
</reference>
<proteinExistence type="inferred from homology"/>
<comment type="function">
    <text evidence="1">Protein S19 forms a complex with S13 that binds strongly to the 16S ribosomal RNA.</text>
</comment>
<comment type="similarity">
    <text evidence="1">Belongs to the universal ribosomal protein uS19 family.</text>
</comment>
<accession>C0RJJ7</accession>
<organism>
    <name type="scientific">Brucella melitensis biotype 2 (strain ATCC 23457)</name>
    <dbReference type="NCBI Taxonomy" id="546272"/>
    <lineage>
        <taxon>Bacteria</taxon>
        <taxon>Pseudomonadati</taxon>
        <taxon>Pseudomonadota</taxon>
        <taxon>Alphaproteobacteria</taxon>
        <taxon>Hyphomicrobiales</taxon>
        <taxon>Brucellaceae</taxon>
        <taxon>Brucella/Ochrobactrum group</taxon>
        <taxon>Brucella</taxon>
    </lineage>
</organism>
<feature type="chain" id="PRO_1000146373" description="Small ribosomal subunit protein uS19">
    <location>
        <begin position="1"/>
        <end position="92"/>
    </location>
</feature>